<evidence type="ECO:0000250" key="1">
    <source>
        <dbReference type="UniProtKB" id="Q13614"/>
    </source>
</evidence>
<evidence type="ECO:0000255" key="2"/>
<evidence type="ECO:0000255" key="3">
    <source>
        <dbReference type="PROSITE-ProRule" id="PRU00669"/>
    </source>
</evidence>
<evidence type="ECO:0000255" key="4">
    <source>
        <dbReference type="PROSITE-ProRule" id="PRU10044"/>
    </source>
</evidence>
<evidence type="ECO:0000256" key="5">
    <source>
        <dbReference type="SAM" id="MobiDB-lite"/>
    </source>
</evidence>
<evidence type="ECO:0000269" key="6">
    <source>
    </source>
</evidence>
<evidence type="ECO:0000269" key="7">
    <source>
    </source>
</evidence>
<evidence type="ECO:0000305" key="8"/>
<evidence type="ECO:0000305" key="9">
    <source>
    </source>
</evidence>
<evidence type="ECO:0000312" key="10">
    <source>
        <dbReference type="MGI" id="MGI:1891693"/>
    </source>
</evidence>
<evidence type="ECO:0007744" key="11">
    <source>
    </source>
</evidence>
<reference key="1">
    <citation type="journal article" date="2005" name="Science">
        <title>The transcriptional landscape of the mammalian genome.</title>
        <authorList>
            <person name="Carninci P."/>
            <person name="Kasukawa T."/>
            <person name="Katayama S."/>
            <person name="Gough J."/>
            <person name="Frith M.C."/>
            <person name="Maeda N."/>
            <person name="Oyama R."/>
            <person name="Ravasi T."/>
            <person name="Lenhard B."/>
            <person name="Wells C."/>
            <person name="Kodzius R."/>
            <person name="Shimokawa K."/>
            <person name="Bajic V.B."/>
            <person name="Brenner S.E."/>
            <person name="Batalov S."/>
            <person name="Forrest A.R."/>
            <person name="Zavolan M."/>
            <person name="Davis M.J."/>
            <person name="Wilming L.G."/>
            <person name="Aidinis V."/>
            <person name="Allen J.E."/>
            <person name="Ambesi-Impiombato A."/>
            <person name="Apweiler R."/>
            <person name="Aturaliya R.N."/>
            <person name="Bailey T.L."/>
            <person name="Bansal M."/>
            <person name="Baxter L."/>
            <person name="Beisel K.W."/>
            <person name="Bersano T."/>
            <person name="Bono H."/>
            <person name="Chalk A.M."/>
            <person name="Chiu K.P."/>
            <person name="Choudhary V."/>
            <person name="Christoffels A."/>
            <person name="Clutterbuck D.R."/>
            <person name="Crowe M.L."/>
            <person name="Dalla E."/>
            <person name="Dalrymple B.P."/>
            <person name="de Bono B."/>
            <person name="Della Gatta G."/>
            <person name="di Bernardo D."/>
            <person name="Down T."/>
            <person name="Engstrom P."/>
            <person name="Fagiolini M."/>
            <person name="Faulkner G."/>
            <person name="Fletcher C.F."/>
            <person name="Fukushima T."/>
            <person name="Furuno M."/>
            <person name="Futaki S."/>
            <person name="Gariboldi M."/>
            <person name="Georgii-Hemming P."/>
            <person name="Gingeras T.R."/>
            <person name="Gojobori T."/>
            <person name="Green R.E."/>
            <person name="Gustincich S."/>
            <person name="Harbers M."/>
            <person name="Hayashi Y."/>
            <person name="Hensch T.K."/>
            <person name="Hirokawa N."/>
            <person name="Hill D."/>
            <person name="Huminiecki L."/>
            <person name="Iacono M."/>
            <person name="Ikeo K."/>
            <person name="Iwama A."/>
            <person name="Ishikawa T."/>
            <person name="Jakt M."/>
            <person name="Kanapin A."/>
            <person name="Katoh M."/>
            <person name="Kawasawa Y."/>
            <person name="Kelso J."/>
            <person name="Kitamura H."/>
            <person name="Kitano H."/>
            <person name="Kollias G."/>
            <person name="Krishnan S.P."/>
            <person name="Kruger A."/>
            <person name="Kummerfeld S.K."/>
            <person name="Kurochkin I.V."/>
            <person name="Lareau L.F."/>
            <person name="Lazarevic D."/>
            <person name="Lipovich L."/>
            <person name="Liu J."/>
            <person name="Liuni S."/>
            <person name="McWilliam S."/>
            <person name="Madan Babu M."/>
            <person name="Madera M."/>
            <person name="Marchionni L."/>
            <person name="Matsuda H."/>
            <person name="Matsuzawa S."/>
            <person name="Miki H."/>
            <person name="Mignone F."/>
            <person name="Miyake S."/>
            <person name="Morris K."/>
            <person name="Mottagui-Tabar S."/>
            <person name="Mulder N."/>
            <person name="Nakano N."/>
            <person name="Nakauchi H."/>
            <person name="Ng P."/>
            <person name="Nilsson R."/>
            <person name="Nishiguchi S."/>
            <person name="Nishikawa S."/>
            <person name="Nori F."/>
            <person name="Ohara O."/>
            <person name="Okazaki Y."/>
            <person name="Orlando V."/>
            <person name="Pang K.C."/>
            <person name="Pavan W.J."/>
            <person name="Pavesi G."/>
            <person name="Pesole G."/>
            <person name="Petrovsky N."/>
            <person name="Piazza S."/>
            <person name="Reed J."/>
            <person name="Reid J.F."/>
            <person name="Ring B.Z."/>
            <person name="Ringwald M."/>
            <person name="Rost B."/>
            <person name="Ruan Y."/>
            <person name="Salzberg S.L."/>
            <person name="Sandelin A."/>
            <person name="Schneider C."/>
            <person name="Schoenbach C."/>
            <person name="Sekiguchi K."/>
            <person name="Semple C.A."/>
            <person name="Seno S."/>
            <person name="Sessa L."/>
            <person name="Sheng Y."/>
            <person name="Shibata Y."/>
            <person name="Shimada H."/>
            <person name="Shimada K."/>
            <person name="Silva D."/>
            <person name="Sinclair B."/>
            <person name="Sperling S."/>
            <person name="Stupka E."/>
            <person name="Sugiura K."/>
            <person name="Sultana R."/>
            <person name="Takenaka Y."/>
            <person name="Taki K."/>
            <person name="Tammoja K."/>
            <person name="Tan S.L."/>
            <person name="Tang S."/>
            <person name="Taylor M.S."/>
            <person name="Tegner J."/>
            <person name="Teichmann S.A."/>
            <person name="Ueda H.R."/>
            <person name="van Nimwegen E."/>
            <person name="Verardo R."/>
            <person name="Wei C.L."/>
            <person name="Yagi K."/>
            <person name="Yamanishi H."/>
            <person name="Zabarovsky E."/>
            <person name="Zhu S."/>
            <person name="Zimmer A."/>
            <person name="Hide W."/>
            <person name="Bult C."/>
            <person name="Grimmond S.M."/>
            <person name="Teasdale R.D."/>
            <person name="Liu E.T."/>
            <person name="Brusic V."/>
            <person name="Quackenbush J."/>
            <person name="Wahlestedt C."/>
            <person name="Mattick J.S."/>
            <person name="Hume D.A."/>
            <person name="Kai C."/>
            <person name="Sasaki D."/>
            <person name="Tomaru Y."/>
            <person name="Fukuda S."/>
            <person name="Kanamori-Katayama M."/>
            <person name="Suzuki M."/>
            <person name="Aoki J."/>
            <person name="Arakawa T."/>
            <person name="Iida J."/>
            <person name="Imamura K."/>
            <person name="Itoh M."/>
            <person name="Kato T."/>
            <person name="Kawaji H."/>
            <person name="Kawagashira N."/>
            <person name="Kawashima T."/>
            <person name="Kojima M."/>
            <person name="Kondo S."/>
            <person name="Konno H."/>
            <person name="Nakano K."/>
            <person name="Ninomiya N."/>
            <person name="Nishio T."/>
            <person name="Okada M."/>
            <person name="Plessy C."/>
            <person name="Shibata K."/>
            <person name="Shiraki T."/>
            <person name="Suzuki S."/>
            <person name="Tagami M."/>
            <person name="Waki K."/>
            <person name="Watahiki A."/>
            <person name="Okamura-Oho Y."/>
            <person name="Suzuki H."/>
            <person name="Kawai J."/>
            <person name="Hayashizaki Y."/>
        </authorList>
    </citation>
    <scope>NUCLEOTIDE SEQUENCE [LARGE SCALE MRNA]</scope>
    <source>
        <strain>C57BL/6J</strain>
        <tissue>Head</tissue>
    </source>
</reference>
<reference key="2">
    <citation type="journal article" date="1998" name="Hum. Mol. Genet.">
        <title>Characterization of the myotubularin dual specificity phosphatase gene family from yeast to human.</title>
        <authorList>
            <person name="Laporte J."/>
            <person name="Blondeau F."/>
            <person name="Buj-Bello A."/>
            <person name="Tentler D."/>
            <person name="Kretz C."/>
            <person name="Dahl N."/>
            <person name="Mandel J.-L."/>
        </authorList>
    </citation>
    <scope>NUCLEOTIDE SEQUENCE [MRNA] OF 291-602</scope>
</reference>
<reference key="3">
    <citation type="journal article" date="2003" name="Proc. Natl. Acad. Sci. U.S.A.">
        <title>Characterization of myotubularin-related protein 7 and its binding partner, myotubularin-related protein 9.</title>
        <authorList>
            <person name="Mochizuki Y."/>
            <person name="Majerus P.W."/>
        </authorList>
    </citation>
    <scope>FUNCTION</scope>
    <scope>CATALYTIC ACTIVITY</scope>
    <scope>ACTIVITY REGULATION</scope>
    <scope>BIOPHYSICOCHEMICAL PROPERTIES</scope>
    <scope>INTERACTION WITH MTMR9</scope>
    <scope>SUBCELLULAR LOCATION</scope>
    <scope>TISSUE SPECIFICITY</scope>
</reference>
<reference key="4">
    <citation type="journal article" date="2010" name="Cell">
        <title>A tissue-specific atlas of mouse protein phosphorylation and expression.</title>
        <authorList>
            <person name="Huttlin E.L."/>
            <person name="Jedrychowski M.P."/>
            <person name="Elias J.E."/>
            <person name="Goswami T."/>
            <person name="Rad R."/>
            <person name="Beausoleil S.A."/>
            <person name="Villen J."/>
            <person name="Haas W."/>
            <person name="Sowa M.E."/>
            <person name="Gygi S.P."/>
        </authorList>
    </citation>
    <scope>PHOSPHORYLATION [LARGE SCALE ANALYSIS] AT THR-578</scope>
    <scope>IDENTIFICATION BY MASS SPECTROMETRY [LARGE SCALE ANALYSIS]</scope>
    <source>
        <tissue>Brain</tissue>
        <tissue>Pancreas</tissue>
    </source>
</reference>
<reference key="5">
    <citation type="journal article" date="2013" name="J. Biol. Chem.">
        <title>Phosphatidylinositol 3-phosphatase myotubularin-related protein 6 (MTMR6) is regulated by small GTPase Rab1B in the early secretory and autophagic pathways.</title>
        <authorList>
            <person name="Mochizuki Y."/>
            <person name="Ohashi R."/>
            <person name="Kawamura T."/>
            <person name="Iwanari H."/>
            <person name="Kodama T."/>
            <person name="Naito M."/>
            <person name="Hamakubo T."/>
        </authorList>
    </citation>
    <scope>INTERACTION WITH RAB1B</scope>
</reference>
<dbReference type="EC" id="3.1.3.64" evidence="6"/>
<dbReference type="EMBL" id="AK081973">
    <property type="protein sequence ID" value="BAC38383.1"/>
    <property type="molecule type" value="mRNA"/>
</dbReference>
<dbReference type="EMBL" id="AF073882">
    <property type="protein sequence ID" value="AAC80004.1"/>
    <property type="molecule type" value="mRNA"/>
</dbReference>
<dbReference type="CCDS" id="CCDS40324.1"/>
<dbReference type="RefSeq" id="NP_001035789.1">
    <property type="nucleotide sequence ID" value="NM_001040699.2"/>
</dbReference>
<dbReference type="SMR" id="Q9Z2C9"/>
<dbReference type="BioGRID" id="207637">
    <property type="interactions" value="3"/>
</dbReference>
<dbReference type="FunCoup" id="Q9Z2C9">
    <property type="interactions" value="1479"/>
</dbReference>
<dbReference type="STRING" id="10090.ENSMUSP00000043851"/>
<dbReference type="GlyGen" id="Q9Z2C9">
    <property type="glycosylation" value="2 sites, 2 N-linked glycans (2 sites)"/>
</dbReference>
<dbReference type="iPTMnet" id="Q9Z2C9"/>
<dbReference type="PhosphoSitePlus" id="Q9Z2C9"/>
<dbReference type="PaxDb" id="10090-ENSMUSP00000043851"/>
<dbReference type="PeptideAtlas" id="Q9Z2C9"/>
<dbReference type="ProteomicsDB" id="290112"/>
<dbReference type="Antibodypedia" id="1473">
    <property type="antibodies" value="63 antibodies from 17 providers"/>
</dbReference>
<dbReference type="DNASU" id="54384"/>
<dbReference type="Ensembl" id="ENSMUST00000048898.17">
    <property type="protein sequence ID" value="ENSMUSP00000043851.11"/>
    <property type="gene ID" value="ENSMUSG00000039431.17"/>
</dbReference>
<dbReference type="GeneID" id="54384"/>
<dbReference type="KEGG" id="mmu:54384"/>
<dbReference type="UCSC" id="uc009lmz.1">
    <property type="organism name" value="mouse"/>
</dbReference>
<dbReference type="AGR" id="MGI:1891693"/>
<dbReference type="CTD" id="9108"/>
<dbReference type="MGI" id="MGI:1891693">
    <property type="gene designation" value="Mtmr7"/>
</dbReference>
<dbReference type="VEuPathDB" id="HostDB:ENSMUSG00000039431"/>
<dbReference type="eggNOG" id="KOG1089">
    <property type="taxonomic scope" value="Eukaryota"/>
</dbReference>
<dbReference type="GeneTree" id="ENSGT00940000155777"/>
<dbReference type="InParanoid" id="Q9Z2C9"/>
<dbReference type="OMA" id="WTNRAEF"/>
<dbReference type="OrthoDB" id="271628at2759"/>
<dbReference type="PhylomeDB" id="Q9Z2C9"/>
<dbReference type="TreeFam" id="TF315197"/>
<dbReference type="Reactome" id="R-MMU-1660517">
    <property type="pathway name" value="Synthesis of PIPs at the late endosome membrane"/>
</dbReference>
<dbReference type="BioGRID-ORCS" id="54384">
    <property type="hits" value="1 hit in 80 CRISPR screens"/>
</dbReference>
<dbReference type="ChiTaRS" id="Mtmr7">
    <property type="organism name" value="mouse"/>
</dbReference>
<dbReference type="PRO" id="PR:Q9Z2C9"/>
<dbReference type="Proteomes" id="UP000000589">
    <property type="component" value="Chromosome 8"/>
</dbReference>
<dbReference type="RNAct" id="Q9Z2C9">
    <property type="molecule type" value="protein"/>
</dbReference>
<dbReference type="Bgee" id="ENSMUSG00000039431">
    <property type="expression patterns" value="Expressed in epithelium of lens and 217 other cell types or tissues"/>
</dbReference>
<dbReference type="ExpressionAtlas" id="Q9Z2C9">
    <property type="expression patterns" value="baseline and differential"/>
</dbReference>
<dbReference type="GO" id="GO:0005829">
    <property type="term" value="C:cytosol"/>
    <property type="evidence" value="ECO:0000314"/>
    <property type="project" value="MGI"/>
</dbReference>
<dbReference type="GO" id="GO:0012505">
    <property type="term" value="C:endomembrane system"/>
    <property type="evidence" value="ECO:0007669"/>
    <property type="project" value="UniProtKB-SubCell"/>
</dbReference>
<dbReference type="GO" id="GO:0016020">
    <property type="term" value="C:membrane"/>
    <property type="evidence" value="ECO:0000314"/>
    <property type="project" value="MGI"/>
</dbReference>
<dbReference type="GO" id="GO:0016312">
    <property type="term" value="F:inositol bisphosphate phosphatase activity"/>
    <property type="evidence" value="ECO:0000269"/>
    <property type="project" value="Reactome"/>
</dbReference>
<dbReference type="GO" id="GO:0004438">
    <property type="term" value="F:phosphatidylinositol-3-phosphate phosphatase activity"/>
    <property type="evidence" value="ECO:0007669"/>
    <property type="project" value="UniProtKB-EC"/>
</dbReference>
<dbReference type="GO" id="GO:0046856">
    <property type="term" value="P:phosphatidylinositol dephosphorylation"/>
    <property type="evidence" value="ECO:0000314"/>
    <property type="project" value="MGI"/>
</dbReference>
<dbReference type="CDD" id="cd13344">
    <property type="entry name" value="PH-GRAM_MTMR7"/>
    <property type="match status" value="1"/>
</dbReference>
<dbReference type="CDD" id="cd14583">
    <property type="entry name" value="PTP-MTMR7"/>
    <property type="match status" value="1"/>
</dbReference>
<dbReference type="FunFam" id="2.30.29.30:FF:000135">
    <property type="entry name" value="Myotubularin related protein 6"/>
    <property type="match status" value="1"/>
</dbReference>
<dbReference type="Gene3D" id="2.30.29.30">
    <property type="entry name" value="Pleckstrin-homology domain (PH domain)/Phosphotyrosine-binding domain (PTB)"/>
    <property type="match status" value="1"/>
</dbReference>
<dbReference type="InterPro" id="IPR036003">
    <property type="entry name" value="MTMR7_PH-GRAM"/>
</dbReference>
<dbReference type="InterPro" id="IPR030572">
    <property type="entry name" value="MTMR7_PTP"/>
</dbReference>
<dbReference type="InterPro" id="IPR030564">
    <property type="entry name" value="Myotubularin"/>
</dbReference>
<dbReference type="InterPro" id="IPR010569">
    <property type="entry name" value="Myotubularin-like_Pase_dom"/>
</dbReference>
<dbReference type="InterPro" id="IPR011993">
    <property type="entry name" value="PH-like_dom_sf"/>
</dbReference>
<dbReference type="InterPro" id="IPR029021">
    <property type="entry name" value="Prot-tyrosine_phosphatase-like"/>
</dbReference>
<dbReference type="InterPro" id="IPR016130">
    <property type="entry name" value="Tyr_Pase_AS"/>
</dbReference>
<dbReference type="InterPro" id="IPR003595">
    <property type="entry name" value="Tyr_Pase_cat"/>
</dbReference>
<dbReference type="InterPro" id="IPR000387">
    <property type="entry name" value="Tyr_Pase_dom"/>
</dbReference>
<dbReference type="PANTHER" id="PTHR10807">
    <property type="entry name" value="MYOTUBULARIN-RELATED"/>
    <property type="match status" value="1"/>
</dbReference>
<dbReference type="PANTHER" id="PTHR10807:SF35">
    <property type="entry name" value="MYOTUBULARIN-RELATED PROTEIN 7"/>
    <property type="match status" value="1"/>
</dbReference>
<dbReference type="Pfam" id="PF06602">
    <property type="entry name" value="Myotub-related"/>
    <property type="match status" value="1"/>
</dbReference>
<dbReference type="Pfam" id="PF21098">
    <property type="entry name" value="PH-GRAM_MTMR6-like"/>
    <property type="match status" value="1"/>
</dbReference>
<dbReference type="SMART" id="SM00404">
    <property type="entry name" value="PTPc_motif"/>
    <property type="match status" value="1"/>
</dbReference>
<dbReference type="SUPFAM" id="SSF52799">
    <property type="entry name" value="(Phosphotyrosine protein) phosphatases II"/>
    <property type="match status" value="1"/>
</dbReference>
<dbReference type="SUPFAM" id="SSF50729">
    <property type="entry name" value="PH domain-like"/>
    <property type="match status" value="1"/>
</dbReference>
<dbReference type="PROSITE" id="PS51339">
    <property type="entry name" value="PPASE_MYOTUBULARIN"/>
    <property type="match status" value="1"/>
</dbReference>
<dbReference type="PROSITE" id="PS00383">
    <property type="entry name" value="TYR_PHOSPHATASE_1"/>
    <property type="match status" value="1"/>
</dbReference>
<dbReference type="PROSITE" id="PS50056">
    <property type="entry name" value="TYR_PHOSPHATASE_2"/>
    <property type="match status" value="1"/>
</dbReference>
<organism>
    <name type="scientific">Mus musculus</name>
    <name type="common">Mouse</name>
    <dbReference type="NCBI Taxonomy" id="10090"/>
    <lineage>
        <taxon>Eukaryota</taxon>
        <taxon>Metazoa</taxon>
        <taxon>Chordata</taxon>
        <taxon>Craniata</taxon>
        <taxon>Vertebrata</taxon>
        <taxon>Euteleostomi</taxon>
        <taxon>Mammalia</taxon>
        <taxon>Eutheria</taxon>
        <taxon>Euarchontoglires</taxon>
        <taxon>Glires</taxon>
        <taxon>Rodentia</taxon>
        <taxon>Myomorpha</taxon>
        <taxon>Muroidea</taxon>
        <taxon>Muridae</taxon>
        <taxon>Murinae</taxon>
        <taxon>Mus</taxon>
        <taxon>Mus</taxon>
    </lineage>
</organism>
<keyword id="KW-0175">Coiled coil</keyword>
<keyword id="KW-0963">Cytoplasm</keyword>
<keyword id="KW-0378">Hydrolase</keyword>
<keyword id="KW-0443">Lipid metabolism</keyword>
<keyword id="KW-0472">Membrane</keyword>
<keyword id="KW-0597">Phosphoprotein</keyword>
<keyword id="KW-1185">Reference proteome</keyword>
<gene>
    <name evidence="10" type="primary">Mtmr7</name>
</gene>
<sequence length="660" mass="75608">MEHIRTPKVENVRLVDRVSCKKAALGTLYLTATHVIFVENAPDTRKETWILHSQISTIEKQATTATGCPLLIRCKNFQIVQLVIPQERDCHDVYISLIRLARPVKYEELYCFSFNPKLDKEEREQGWLLVDLSEEYKRMGLPDNYWQLSDVNRDYRVCDSYPTELYVPRSATAHIIVGSSKFRSRRRFPALSYYCKDSHASICRSSQPLSGFSARCLEDEQMLQAIRKANPGSDFIYVVDTRPKLNAMANRAAGKGYENEDNYSNIKFQFIGIENIHVMRNSLQKMLEVCELKSPSMSDFLWGLENSGWLRHIKAIMDAGIFIAKAVSEEGASVLVHCSDGWDRTAQVCSVASLLLDPYYRTLKGFMVLIEKDWISFGHKFNHRYGNLDGDPKEISPVIDQFIECVWQLTEQFPCAFEFNERFLTHIQHHVYSCQFGNFLCNSQKERRELKIQERTYSLWSNLWKNRADYLNPLFRADHSQTQGSLHLPTAPCNFTYKFWNGMYNRFEKGLQPRQSVTDYLMAVKEESQQLEEELESLEERLEKIQKVHLHGTKVKSKQSEPSKHSGFSTSDHSTANTPQDYSGNSKSFPSRSPSQGDEDSALILTQDNLKSSDPDLSVNSDQESGVEDLSCRSPSGGEHAPSEDSGKDRDSDEAVFLTA</sequence>
<feature type="chain" id="PRO_0000094941" description="Phosphatidylinositol-3-phosphate phosphatase MTMR7">
    <location>
        <begin position="1"/>
        <end position="660"/>
    </location>
</feature>
<feature type="domain" description="Myotubularin phosphatase" evidence="3">
    <location>
        <begin position="126"/>
        <end position="504"/>
    </location>
</feature>
<feature type="region of interest" description="Disordered" evidence="5">
    <location>
        <begin position="550"/>
        <end position="660"/>
    </location>
</feature>
<feature type="coiled-coil region" evidence="2">
    <location>
        <begin position="514"/>
        <end position="548"/>
    </location>
</feature>
<feature type="compositionally biased region" description="Polar residues" evidence="5">
    <location>
        <begin position="566"/>
        <end position="596"/>
    </location>
</feature>
<feature type="compositionally biased region" description="Basic and acidic residues" evidence="5">
    <location>
        <begin position="641"/>
        <end position="653"/>
    </location>
</feature>
<feature type="active site" description="Phosphocysteine intermediate" evidence="4">
    <location>
        <position position="338"/>
    </location>
</feature>
<feature type="binding site" evidence="1">
    <location>
        <position position="250"/>
    </location>
    <ligand>
        <name>a 1,2-diacyl-sn-glycero-3-phospho-(1D-myo-inositol-3-phosphate)</name>
        <dbReference type="ChEBI" id="CHEBI:58088"/>
    </ligand>
</feature>
<feature type="binding site" evidence="1">
    <location>
        <position position="275"/>
    </location>
    <ligand>
        <name>a 1,2-diacyl-sn-glycero-3-phospho-(1D-myo-inositol-3-phosphate)</name>
        <dbReference type="ChEBI" id="CHEBI:58088"/>
    </ligand>
</feature>
<feature type="binding site" evidence="1">
    <location>
        <position position="276"/>
    </location>
    <ligand>
        <name>a 1,2-diacyl-sn-glycero-3-phospho-(1D-myo-inositol-3-phosphate)</name>
        <dbReference type="ChEBI" id="CHEBI:58088"/>
    </ligand>
</feature>
<feature type="binding site" evidence="1">
    <location>
        <position position="339"/>
    </location>
    <ligand>
        <name>a 1,2-diacyl-sn-glycero-3-phospho-(1D-myo-inositol-3-phosphate)</name>
        <dbReference type="ChEBI" id="CHEBI:58088"/>
    </ligand>
</feature>
<feature type="binding site" evidence="1">
    <location>
        <position position="340"/>
    </location>
    <ligand>
        <name>a 1,2-diacyl-sn-glycero-3-phospho-(1D-myo-inositol-3-phosphate)</name>
        <dbReference type="ChEBI" id="CHEBI:58088"/>
    </ligand>
</feature>
<feature type="binding site" evidence="1">
    <location>
        <position position="341"/>
    </location>
    <ligand>
        <name>a 1,2-diacyl-sn-glycero-3-phospho-(1D-myo-inositol-3-phosphate)</name>
        <dbReference type="ChEBI" id="CHEBI:58088"/>
    </ligand>
</feature>
<feature type="binding site" evidence="1">
    <location>
        <position position="342"/>
    </location>
    <ligand>
        <name>a 1,2-diacyl-sn-glycero-3-phospho-(1D-myo-inositol-3-phosphate)</name>
        <dbReference type="ChEBI" id="CHEBI:58088"/>
    </ligand>
</feature>
<feature type="binding site" evidence="1">
    <location>
        <position position="343"/>
    </location>
    <ligand>
        <name>a 1,2-diacyl-sn-glycero-3-phospho-(1D-myo-inositol-3-phosphate)</name>
        <dbReference type="ChEBI" id="CHEBI:58088"/>
    </ligand>
</feature>
<feature type="binding site" evidence="1">
    <location>
        <position position="344"/>
    </location>
    <ligand>
        <name>a 1,2-diacyl-sn-glycero-3-phospho-(1D-myo-inositol-3-phosphate)</name>
        <dbReference type="ChEBI" id="CHEBI:58088"/>
    </ligand>
</feature>
<feature type="binding site" evidence="1">
    <location>
        <position position="384"/>
    </location>
    <ligand>
        <name>a 1,2-diacyl-sn-glycero-3-phospho-(1D-myo-inositol-3-phosphate)</name>
        <dbReference type="ChEBI" id="CHEBI:58088"/>
    </ligand>
</feature>
<feature type="modified residue" description="Phosphothreonine" evidence="11">
    <location>
        <position position="578"/>
    </location>
</feature>
<feature type="sequence conflict" description="In Ref. 2." evidence="8" ref="2">
    <original>PQDYSGNSKSFPSRSPSQGDEDSA</original>
    <variation>LRITVGTASPSHPGARPRVMKILL</variation>
    <location>
        <begin position="579"/>
        <end position="602"/>
    </location>
</feature>
<protein>
    <recommendedName>
        <fullName evidence="9">Phosphatidylinositol-3-phosphate phosphatase MTMR7</fullName>
        <ecNumber evidence="6">3.1.3.64</ecNumber>
    </recommendedName>
    <alternativeName>
        <fullName evidence="9">Inositol 1,3-bisphosphate phosphatase</fullName>
    </alternativeName>
    <alternativeName>
        <fullName evidence="10">Myotubularin-related protein 7</fullName>
    </alternativeName>
</protein>
<comment type="function">
    <text evidence="6">Lipid phosphatase that specifically dephosphorylates the D-3 position of phosphatidylinositol 3-phosphate (PtdIns(3)P) and inositol 1,3-bisphosphate (Ins(1,3)P2).</text>
</comment>
<comment type="catalytic activity">
    <reaction evidence="6">
        <text>a 1,2-diacyl-sn-glycero-3-phospho-(1D-myo-inositol-3-phosphate) + H2O = a 1,2-diacyl-sn-glycero-3-phospho-(1D-myo-inositol) + phosphate</text>
        <dbReference type="Rhea" id="RHEA:12316"/>
        <dbReference type="ChEBI" id="CHEBI:15377"/>
        <dbReference type="ChEBI" id="CHEBI:43474"/>
        <dbReference type="ChEBI" id="CHEBI:57880"/>
        <dbReference type="ChEBI" id="CHEBI:58088"/>
        <dbReference type="EC" id="3.1.3.64"/>
    </reaction>
</comment>
<comment type="catalytic activity">
    <reaction evidence="6">
        <text>1D-myo-inositol 1,3-bisphosphate + H2O = 1D-myo-inositol 1-phosphate + phosphate</text>
        <dbReference type="Rhea" id="RHEA:57840"/>
        <dbReference type="ChEBI" id="CHEBI:15377"/>
        <dbReference type="ChEBI" id="CHEBI:43474"/>
        <dbReference type="ChEBI" id="CHEBI:58433"/>
        <dbReference type="ChEBI" id="CHEBI:83242"/>
    </reaction>
</comment>
<comment type="activity regulation">
    <text evidence="6">Interaction with MTMR9 increases phosphatase activity.</text>
</comment>
<comment type="biophysicochemical properties">
    <kinetics>
        <KM evidence="6">57 uM for inositol 1,3-bisphosphate (at pH 6 and in presence of MTMR9)</KM>
        <Vmax evidence="6">7.2 umol/min/mg enzyme (at pH 6 and in presence of MTMR9)</Vmax>
    </kinetics>
</comment>
<comment type="subunit">
    <text evidence="6 7">Heterodimer (via C-terminus) with MTMR9 (via coiled coil domain); the interaction enhances MTMR7 catalytic activity (PubMed:12890864). Does not homodimerize (PubMed:12890864). Interacts with RAB1B (in GDP-bound form) (PubMed:23188820).</text>
</comment>
<comment type="subcellular location">
    <subcellularLocation>
        <location evidence="6">Cytoplasm</location>
    </subcellularLocation>
    <subcellularLocation>
        <location evidence="6">Endomembrane system</location>
        <topology evidence="6">Peripheral membrane protein</topology>
        <orientation evidence="6">Cytoplasmic side</orientation>
    </subcellularLocation>
    <text evidence="6">May partially localize to endosomes and/or the Golgi apparatus.</text>
</comment>
<comment type="tissue specificity">
    <text evidence="6">Highly expressed in brain (at protein level). Expressed at low levels in liver, kidney and testis.</text>
</comment>
<comment type="similarity">
    <text evidence="8">Belongs to the protein-tyrosine phosphatase family. Non-receptor class myotubularin subfamily.</text>
</comment>
<accession>Q9Z2C9</accession>
<accession>Q8C4J6</accession>
<name>MTMR7_MOUSE</name>
<proteinExistence type="evidence at protein level"/>